<name>MSBA_ALKEH</name>
<feature type="chain" id="PRO_0000271612" description="ATP-dependent lipid A-core flippase">
    <location>
        <begin position="1"/>
        <end position="589"/>
    </location>
</feature>
<feature type="transmembrane region" description="Helical" evidence="1">
    <location>
        <begin position="33"/>
        <end position="53"/>
    </location>
</feature>
<feature type="transmembrane region" description="Helical" evidence="1">
    <location>
        <begin position="70"/>
        <end position="90"/>
    </location>
</feature>
<feature type="transmembrane region" description="Helical" evidence="1">
    <location>
        <begin position="148"/>
        <end position="168"/>
    </location>
</feature>
<feature type="transmembrane region" description="Helical" evidence="1">
    <location>
        <begin position="170"/>
        <end position="190"/>
    </location>
</feature>
<feature type="transmembrane region" description="Helical" evidence="1">
    <location>
        <begin position="262"/>
        <end position="282"/>
    </location>
</feature>
<feature type="transmembrane region" description="Helical" evidence="1">
    <location>
        <begin position="283"/>
        <end position="303"/>
    </location>
</feature>
<feature type="domain" description="ABC transmembrane type-1" evidence="1">
    <location>
        <begin position="33"/>
        <end position="315"/>
    </location>
</feature>
<feature type="domain" description="ABC transporter" evidence="1">
    <location>
        <begin position="347"/>
        <end position="583"/>
    </location>
</feature>
<feature type="binding site" evidence="1">
    <location>
        <begin position="381"/>
        <end position="388"/>
    </location>
    <ligand>
        <name>ATP</name>
        <dbReference type="ChEBI" id="CHEBI:30616"/>
    </ligand>
</feature>
<organism>
    <name type="scientific">Alkalilimnicola ehrlichii (strain ATCC BAA-1101 / DSM 17681 / MLHE-1)</name>
    <dbReference type="NCBI Taxonomy" id="187272"/>
    <lineage>
        <taxon>Bacteria</taxon>
        <taxon>Pseudomonadati</taxon>
        <taxon>Pseudomonadota</taxon>
        <taxon>Gammaproteobacteria</taxon>
        <taxon>Chromatiales</taxon>
        <taxon>Ectothiorhodospiraceae</taxon>
        <taxon>Alkalilimnicola</taxon>
    </lineage>
</organism>
<gene>
    <name evidence="1" type="primary">msbA</name>
    <name type="ordered locus">Mlg_2803</name>
</gene>
<protein>
    <recommendedName>
        <fullName evidence="1">ATP-dependent lipid A-core flippase</fullName>
        <ecNumber evidence="1">7.5.2.6</ecNumber>
    </recommendedName>
    <alternativeName>
        <fullName evidence="1">Lipid A export ATP-binding/permease protein MsbA</fullName>
    </alternativeName>
</protein>
<keyword id="KW-0067">ATP-binding</keyword>
<keyword id="KW-0997">Cell inner membrane</keyword>
<keyword id="KW-1003">Cell membrane</keyword>
<keyword id="KW-0445">Lipid transport</keyword>
<keyword id="KW-0472">Membrane</keyword>
<keyword id="KW-0547">Nucleotide-binding</keyword>
<keyword id="KW-1185">Reference proteome</keyword>
<keyword id="KW-1278">Translocase</keyword>
<keyword id="KW-0812">Transmembrane</keyword>
<keyword id="KW-1133">Transmembrane helix</keyword>
<keyword id="KW-0813">Transport</keyword>
<proteinExistence type="inferred from homology"/>
<evidence type="ECO:0000255" key="1">
    <source>
        <dbReference type="HAMAP-Rule" id="MF_01703"/>
    </source>
</evidence>
<sequence length="589" mass="65036">MSKGHSDHPSAGESWHLYKRIFGFIKPYWRLGVLAIVCMVLAAAGQAAFAWIIQPLVDGTFIEQDPGARLWVPATLVGIFLFHGVTTFASDYTVAWVGRRVVKDVRQAVFEQYLRLPTSYFDKNSPGTLLAKLTYNVNQISAAASKAVVVLVRDTFTVIFLLAYMTYLSGWLVMIVFGLGPLVAVVVTAANKRFRKLSRRMQASVGEYAQIAEDGIRGQAEVKIFGGQRYEAERFDRTNTRHHRQLMRYKAVQAASQPLAQLGAVIALAIILYLATMDVILETISPGGMISFIAAMLLMLPPLKRVIGVNAEIQKALAAGESVFEVLDAPPEPDHGQRPLERARGLIEFDRVAFRYPESEDWVLRDINLSIQPGETVALVGRSGSGKTTLASLLPRFYDPQRGEIRLDGHPLAEYRLQALRSQMSLVNQQVVLFNDSLANNIAYGLSERPTAAQLQAAARAANALEFIEELPEGFDTVIGENGVMLSGGQRQRIAIARALLKDAPILILDEATSALDSESEKRIQEALEKLMRGRTTLVIAHRLSTIEDADRIVVLDAGRVVETGTHRELLDHNGHYASLHRVQFNGPS</sequence>
<dbReference type="EC" id="7.5.2.6" evidence="1"/>
<dbReference type="EMBL" id="CP000453">
    <property type="protein sequence ID" value="ABI58143.1"/>
    <property type="molecule type" value="Genomic_DNA"/>
</dbReference>
<dbReference type="RefSeq" id="WP_011630536.1">
    <property type="nucleotide sequence ID" value="NC_008340.1"/>
</dbReference>
<dbReference type="SMR" id="Q0A4U4"/>
<dbReference type="KEGG" id="aeh:Mlg_2803"/>
<dbReference type="eggNOG" id="COG1132">
    <property type="taxonomic scope" value="Bacteria"/>
</dbReference>
<dbReference type="HOGENOM" id="CLU_000604_84_3_6"/>
<dbReference type="OrthoDB" id="6336411at2"/>
<dbReference type="Proteomes" id="UP000001962">
    <property type="component" value="Chromosome"/>
</dbReference>
<dbReference type="GO" id="GO:0005886">
    <property type="term" value="C:plasma membrane"/>
    <property type="evidence" value="ECO:0007669"/>
    <property type="project" value="UniProtKB-SubCell"/>
</dbReference>
<dbReference type="GO" id="GO:0015421">
    <property type="term" value="F:ABC-type oligopeptide transporter activity"/>
    <property type="evidence" value="ECO:0007669"/>
    <property type="project" value="TreeGrafter"/>
</dbReference>
<dbReference type="GO" id="GO:0005524">
    <property type="term" value="F:ATP binding"/>
    <property type="evidence" value="ECO:0007669"/>
    <property type="project" value="UniProtKB-KW"/>
</dbReference>
<dbReference type="GO" id="GO:0016887">
    <property type="term" value="F:ATP hydrolysis activity"/>
    <property type="evidence" value="ECO:0007669"/>
    <property type="project" value="InterPro"/>
</dbReference>
<dbReference type="GO" id="GO:0034040">
    <property type="term" value="F:ATPase-coupled lipid transmembrane transporter activity"/>
    <property type="evidence" value="ECO:0007669"/>
    <property type="project" value="InterPro"/>
</dbReference>
<dbReference type="CDD" id="cd18552">
    <property type="entry name" value="ABC_6TM_MsbA_like"/>
    <property type="match status" value="1"/>
</dbReference>
<dbReference type="FunFam" id="3.40.50.300:FF:000140">
    <property type="entry name" value="Lipid A export ATP-binding/permease protein MsbA"/>
    <property type="match status" value="1"/>
</dbReference>
<dbReference type="Gene3D" id="1.20.1560.10">
    <property type="entry name" value="ABC transporter type 1, transmembrane domain"/>
    <property type="match status" value="1"/>
</dbReference>
<dbReference type="Gene3D" id="3.40.50.300">
    <property type="entry name" value="P-loop containing nucleotide triphosphate hydrolases"/>
    <property type="match status" value="1"/>
</dbReference>
<dbReference type="InterPro" id="IPR003593">
    <property type="entry name" value="AAA+_ATPase"/>
</dbReference>
<dbReference type="InterPro" id="IPR011527">
    <property type="entry name" value="ABC1_TM_dom"/>
</dbReference>
<dbReference type="InterPro" id="IPR036640">
    <property type="entry name" value="ABC1_TM_sf"/>
</dbReference>
<dbReference type="InterPro" id="IPR003439">
    <property type="entry name" value="ABC_transporter-like_ATP-bd"/>
</dbReference>
<dbReference type="InterPro" id="IPR017871">
    <property type="entry name" value="ABC_transporter-like_CS"/>
</dbReference>
<dbReference type="InterPro" id="IPR011917">
    <property type="entry name" value="ABC_transpr_lipidA"/>
</dbReference>
<dbReference type="InterPro" id="IPR027417">
    <property type="entry name" value="P-loop_NTPase"/>
</dbReference>
<dbReference type="InterPro" id="IPR039421">
    <property type="entry name" value="Type_1_exporter"/>
</dbReference>
<dbReference type="NCBIfam" id="TIGR02203">
    <property type="entry name" value="MsbA_lipidA"/>
    <property type="match status" value="1"/>
</dbReference>
<dbReference type="PANTHER" id="PTHR43394:SF1">
    <property type="entry name" value="ATP-BINDING CASSETTE SUB-FAMILY B MEMBER 10, MITOCHONDRIAL"/>
    <property type="match status" value="1"/>
</dbReference>
<dbReference type="PANTHER" id="PTHR43394">
    <property type="entry name" value="ATP-DEPENDENT PERMEASE MDL1, MITOCHONDRIAL"/>
    <property type="match status" value="1"/>
</dbReference>
<dbReference type="Pfam" id="PF00664">
    <property type="entry name" value="ABC_membrane"/>
    <property type="match status" value="1"/>
</dbReference>
<dbReference type="Pfam" id="PF00005">
    <property type="entry name" value="ABC_tran"/>
    <property type="match status" value="1"/>
</dbReference>
<dbReference type="SMART" id="SM00382">
    <property type="entry name" value="AAA"/>
    <property type="match status" value="1"/>
</dbReference>
<dbReference type="SUPFAM" id="SSF90123">
    <property type="entry name" value="ABC transporter transmembrane region"/>
    <property type="match status" value="1"/>
</dbReference>
<dbReference type="SUPFAM" id="SSF52540">
    <property type="entry name" value="P-loop containing nucleoside triphosphate hydrolases"/>
    <property type="match status" value="1"/>
</dbReference>
<dbReference type="PROSITE" id="PS50929">
    <property type="entry name" value="ABC_TM1F"/>
    <property type="match status" value="1"/>
</dbReference>
<dbReference type="PROSITE" id="PS00211">
    <property type="entry name" value="ABC_TRANSPORTER_1"/>
    <property type="match status" value="1"/>
</dbReference>
<dbReference type="PROSITE" id="PS50893">
    <property type="entry name" value="ABC_TRANSPORTER_2"/>
    <property type="match status" value="1"/>
</dbReference>
<dbReference type="PROSITE" id="PS51239">
    <property type="entry name" value="MSBA"/>
    <property type="match status" value="1"/>
</dbReference>
<accession>Q0A4U4</accession>
<reference key="1">
    <citation type="submission" date="2006-08" db="EMBL/GenBank/DDBJ databases">
        <title>Complete sequence of Alkalilimnicola ehrilichei MLHE-1.</title>
        <authorList>
            <person name="Copeland A."/>
            <person name="Lucas S."/>
            <person name="Lapidus A."/>
            <person name="Barry K."/>
            <person name="Detter J.C."/>
            <person name="Glavina del Rio T."/>
            <person name="Hammon N."/>
            <person name="Israni S."/>
            <person name="Dalin E."/>
            <person name="Tice H."/>
            <person name="Pitluck S."/>
            <person name="Sims D."/>
            <person name="Brettin T."/>
            <person name="Bruce D."/>
            <person name="Han C."/>
            <person name="Tapia R."/>
            <person name="Gilna P."/>
            <person name="Schmutz J."/>
            <person name="Larimer F."/>
            <person name="Land M."/>
            <person name="Hauser L."/>
            <person name="Kyrpides N."/>
            <person name="Mikhailova N."/>
            <person name="Oremland R.S."/>
            <person name="Hoeft S.E."/>
            <person name="Switzer-Blum J."/>
            <person name="Kulp T."/>
            <person name="King G."/>
            <person name="Tabita R."/>
            <person name="Witte B."/>
            <person name="Santini J.M."/>
            <person name="Basu P."/>
            <person name="Hollibaugh J.T."/>
            <person name="Xie G."/>
            <person name="Stolz J.F."/>
            <person name="Richardson P."/>
        </authorList>
    </citation>
    <scope>NUCLEOTIDE SEQUENCE [LARGE SCALE GENOMIC DNA]</scope>
    <source>
        <strain>ATCC BAA-1101 / DSM 17681 / MLHE-1</strain>
    </source>
</reference>
<comment type="function">
    <text evidence="1">Involved in lipopolysaccharide (LPS) biosynthesis. Translocates lipid A-core from the inner to the outer leaflet of the inner membrane. Transmembrane domains (TMD) form a pore in the inner membrane and the ATP-binding domain (NBD) is responsible for energy generation.</text>
</comment>
<comment type="catalytic activity">
    <reaction evidence="1">
        <text>ATP + H2O + lipid A-core oligosaccharideSide 1 = ADP + phosphate + lipid A-core oligosaccharideSide 2.</text>
        <dbReference type="EC" id="7.5.2.6"/>
    </reaction>
</comment>
<comment type="subunit">
    <text evidence="1">Homodimer.</text>
</comment>
<comment type="subcellular location">
    <subcellularLocation>
        <location evidence="1">Cell inner membrane</location>
        <topology evidence="1">Multi-pass membrane protein</topology>
    </subcellularLocation>
</comment>
<comment type="domain">
    <text evidence="1">In MsbA the ATP-binding domain (NBD) and the transmembrane domain (TMD) are fused.</text>
</comment>
<comment type="similarity">
    <text evidence="1">Belongs to the ABC transporter superfamily. Lipid exporter (TC 3.A.1.106) family.</text>
</comment>